<sequence>MDLSSKPQQQLLNSLPIAGELTVTGEMGVCYKECLKNHAANLGGHALDGCGEFMPSPTATSTDPSSLRCAACGCHRNFHRRDPSENLNFLTAPPISSPSGTESPPSRHVSSPVPCSYYTSAPPHHVILSLSSGFPGPSDQDPTVVRSENSSRGAMRKRTRTKFTPEQKIKMRAFAEKAGWKINGCDEKSVREFCNEVGIERGVLKVWMHNNKYSLLNGKIREIEHGLCLNTHSNDGDGSSSS</sequence>
<gene>
    <name type="primary">ZHD11</name>
    <name type="synonym">HB29</name>
    <name type="synonym">ZFHD1</name>
    <name type="ordered locus">At1g69600</name>
    <name type="ORF">F24J1.29</name>
</gene>
<organism>
    <name type="scientific">Arabidopsis thaliana</name>
    <name type="common">Mouse-ear cress</name>
    <dbReference type="NCBI Taxonomy" id="3702"/>
    <lineage>
        <taxon>Eukaryota</taxon>
        <taxon>Viridiplantae</taxon>
        <taxon>Streptophyta</taxon>
        <taxon>Embryophyta</taxon>
        <taxon>Tracheophyta</taxon>
        <taxon>Spermatophyta</taxon>
        <taxon>Magnoliopsida</taxon>
        <taxon>eudicotyledons</taxon>
        <taxon>Gunneridae</taxon>
        <taxon>Pentapetalae</taxon>
        <taxon>rosids</taxon>
        <taxon>malvids</taxon>
        <taxon>Brassicales</taxon>
        <taxon>Brassicaceae</taxon>
        <taxon>Camelineae</taxon>
        <taxon>Arabidopsis</taxon>
    </lineage>
</organism>
<feature type="chain" id="PRO_0000417499" description="Zinc-finger homeodomain protein 11">
    <location>
        <begin position="1"/>
        <end position="242"/>
    </location>
</feature>
<feature type="zinc finger region" description="ZF-HD dimerization-type; degenerate" evidence="2">
    <location>
        <begin position="31"/>
        <end position="82"/>
    </location>
</feature>
<feature type="DNA-binding region" description="Homeobox; atypical">
    <location>
        <begin position="156"/>
        <end position="213"/>
    </location>
</feature>
<feature type="region of interest" description="Disordered" evidence="3">
    <location>
        <begin position="83"/>
        <end position="109"/>
    </location>
</feature>
<feature type="region of interest" description="Disordered" evidence="3">
    <location>
        <begin position="135"/>
        <end position="161"/>
    </location>
</feature>
<feature type="site" description="Required for DNA-binding" evidence="1">
    <location>
        <position position="208"/>
    </location>
</feature>
<evidence type="ECO:0000250" key="1"/>
<evidence type="ECO:0000255" key="2">
    <source>
        <dbReference type="PROSITE-ProRule" id="PRU00856"/>
    </source>
</evidence>
<evidence type="ECO:0000256" key="3">
    <source>
        <dbReference type="SAM" id="MobiDB-lite"/>
    </source>
</evidence>
<evidence type="ECO:0000269" key="4">
    <source>
    </source>
</evidence>
<evidence type="ECO:0000269" key="5">
    <source>
    </source>
</evidence>
<evidence type="ECO:0000269" key="6">
    <source>
    </source>
</evidence>
<evidence type="ECO:0000269" key="7">
    <source>
    </source>
</evidence>
<evidence type="ECO:0000305" key="8"/>
<name>ZHD11_ARATH</name>
<accession>Q9SEZ1</accession>
<keyword id="KW-0238">DNA-binding</keyword>
<keyword id="KW-0371">Homeobox</keyword>
<keyword id="KW-0479">Metal-binding</keyword>
<keyword id="KW-0539">Nucleus</keyword>
<keyword id="KW-1185">Reference proteome</keyword>
<keyword id="KW-0804">Transcription</keyword>
<keyword id="KW-0805">Transcription regulation</keyword>
<keyword id="KW-0862">Zinc</keyword>
<keyword id="KW-0863">Zinc-finger</keyword>
<reference key="1">
    <citation type="journal article" date="2000" name="Nature">
        <title>Sequence and analysis of chromosome 1 of the plant Arabidopsis thaliana.</title>
        <authorList>
            <person name="Theologis A."/>
            <person name="Ecker J.R."/>
            <person name="Palm C.J."/>
            <person name="Federspiel N.A."/>
            <person name="Kaul S."/>
            <person name="White O."/>
            <person name="Alonso J."/>
            <person name="Altafi H."/>
            <person name="Araujo R."/>
            <person name="Bowman C.L."/>
            <person name="Brooks S.Y."/>
            <person name="Buehler E."/>
            <person name="Chan A."/>
            <person name="Chao Q."/>
            <person name="Chen H."/>
            <person name="Cheuk R.F."/>
            <person name="Chin C.W."/>
            <person name="Chung M.K."/>
            <person name="Conn L."/>
            <person name="Conway A.B."/>
            <person name="Conway A.R."/>
            <person name="Creasy T.H."/>
            <person name="Dewar K."/>
            <person name="Dunn P."/>
            <person name="Etgu P."/>
            <person name="Feldblyum T.V."/>
            <person name="Feng J.-D."/>
            <person name="Fong B."/>
            <person name="Fujii C.Y."/>
            <person name="Gill J.E."/>
            <person name="Goldsmith A.D."/>
            <person name="Haas B."/>
            <person name="Hansen N.F."/>
            <person name="Hughes B."/>
            <person name="Huizar L."/>
            <person name="Hunter J.L."/>
            <person name="Jenkins J."/>
            <person name="Johnson-Hopson C."/>
            <person name="Khan S."/>
            <person name="Khaykin E."/>
            <person name="Kim C.J."/>
            <person name="Koo H.L."/>
            <person name="Kremenetskaia I."/>
            <person name="Kurtz D.B."/>
            <person name="Kwan A."/>
            <person name="Lam B."/>
            <person name="Langin-Hooper S."/>
            <person name="Lee A."/>
            <person name="Lee J.M."/>
            <person name="Lenz C.A."/>
            <person name="Li J.H."/>
            <person name="Li Y.-P."/>
            <person name="Lin X."/>
            <person name="Liu S.X."/>
            <person name="Liu Z.A."/>
            <person name="Luros J.S."/>
            <person name="Maiti R."/>
            <person name="Marziali A."/>
            <person name="Militscher J."/>
            <person name="Miranda M."/>
            <person name="Nguyen M."/>
            <person name="Nierman W.C."/>
            <person name="Osborne B.I."/>
            <person name="Pai G."/>
            <person name="Peterson J."/>
            <person name="Pham P.K."/>
            <person name="Rizzo M."/>
            <person name="Rooney T."/>
            <person name="Rowley D."/>
            <person name="Sakano H."/>
            <person name="Salzberg S.L."/>
            <person name="Schwartz J.R."/>
            <person name="Shinn P."/>
            <person name="Southwick A.M."/>
            <person name="Sun H."/>
            <person name="Tallon L.J."/>
            <person name="Tambunga G."/>
            <person name="Toriumi M.J."/>
            <person name="Town C.D."/>
            <person name="Utterback T."/>
            <person name="Van Aken S."/>
            <person name="Vaysberg M."/>
            <person name="Vysotskaia V.S."/>
            <person name="Walker M."/>
            <person name="Wu D."/>
            <person name="Yu G."/>
            <person name="Fraser C.M."/>
            <person name="Venter J.C."/>
            <person name="Davis R.W."/>
        </authorList>
    </citation>
    <scope>NUCLEOTIDE SEQUENCE [LARGE SCALE GENOMIC DNA]</scope>
    <source>
        <strain>cv. Columbia</strain>
    </source>
</reference>
<reference key="2">
    <citation type="journal article" date="2017" name="Plant J.">
        <title>Araport11: a complete reannotation of the Arabidopsis thaliana reference genome.</title>
        <authorList>
            <person name="Cheng C.Y."/>
            <person name="Krishnakumar V."/>
            <person name="Chan A.P."/>
            <person name="Thibaud-Nissen F."/>
            <person name="Schobel S."/>
            <person name="Town C.D."/>
        </authorList>
    </citation>
    <scope>GENOME REANNOTATION</scope>
    <source>
        <strain>cv. Columbia</strain>
    </source>
</reference>
<reference key="3">
    <citation type="journal article" date="2006" name="Plant Physiol.">
        <title>The Arabidopsis zinc finger-homeodomain genes encode proteins with unique biochemical properties that are coordinately expressed during floral development.</title>
        <authorList>
            <person name="Tan Q.K."/>
            <person name="Irish V.F."/>
        </authorList>
    </citation>
    <scope>FUNCTION</scope>
    <scope>GENE FAMILY</scope>
    <scope>SUBUNIT</scope>
    <scope>HOMODIMERIZATION</scope>
    <scope>TISSUE SPECIFICITY</scope>
    <scope>DISRUPTION PHENOTYPE</scope>
    <scope>INTERACTION WITH ZHD1; ZHD2; ZHD3; ZHD4; ZHD5; ZHD6; ZHD7; ZHD8; ZHD9; ZHD12; ZHD13 AND ZHD14</scope>
</reference>
<reference key="4">
    <citation type="journal article" date="2007" name="Plant J.">
        <title>Co-expression of the stress-inducible zinc finger homeodomain ZFHD1 and NAC transcription factors enhances expression of the ERD1 gene in Arabidopsis.</title>
        <authorList>
            <person name="Tran L.S."/>
            <person name="Nakashima K."/>
            <person name="Sakuma Y."/>
            <person name="Osakabe Y."/>
            <person name="Qin F."/>
            <person name="Simpson S.D."/>
            <person name="Maruyama K."/>
            <person name="Fujita Y."/>
            <person name="Shinozaki K."/>
            <person name="Yamaguchi-Shinozaki K."/>
        </authorList>
    </citation>
    <scope>FUNCTION</scope>
    <scope>INDUCTION</scope>
    <scope>INTERACTION WITH NAC019; NAC055 AND NAC072</scope>
</reference>
<reference key="5">
    <citation type="journal article" date="2008" name="J. Integr. Plant Biol.">
        <title>Phylogenetic analysis of the plant-specific zinc finger-homeobox and mini zinc finger gene families.</title>
        <authorList>
            <person name="Hu W."/>
            <person name="dePamphilis C.W."/>
            <person name="Ma H."/>
        </authorList>
    </citation>
    <scope>GENE FAMILY</scope>
    <scope>NOMENCLATURE</scope>
</reference>
<reference key="6">
    <citation type="journal article" date="2009" name="Plant Mol. Biol.">
        <title>Stress induced and nuclear localized HIPP26 from Arabidopsis thaliana interacts via its heavy metal associated domain with the drought stress related zinc finger transcription factor ATHB29.</title>
        <authorList>
            <person name="Barth O."/>
            <person name="Vogt S."/>
            <person name="Uhlemann R."/>
            <person name="Zschiesche W."/>
            <person name="Humbeck K."/>
        </authorList>
    </citation>
    <scope>INTERACTION WITH HIPP20; HIPP21; HIPP22; HIPP23; HIPP24; HIPP26; HIPP27 AND HIPP30</scope>
</reference>
<reference key="7">
    <citation type="journal article" date="2011" name="J. Biol. Chem.">
        <title>Nuclear import and DNA binding of the ZHD5 transcription factor is modulated by a competitive peptide inhibitor in Arabidopsis.</title>
        <authorList>
            <person name="Hong S.-Y."/>
            <person name="Kim O.-K."/>
            <person name="Kim S.-G."/>
            <person name="Yang M.-S."/>
            <person name="Park C.-M."/>
        </authorList>
    </citation>
    <scope>GENE FAMILY</scope>
    <scope>NOMENCLATURE</scope>
    <source>
        <strain>cv. Columbia</strain>
    </source>
</reference>
<reference key="8">
    <citation type="journal article" date="2011" name="Proc. Natl. Acad. Sci. U.S.A.">
        <title>The Arabidopsis thaliana Med25 mediator subunit integrates environmental cues to control plant development.</title>
        <authorList>
            <person name="Elfving N."/>
            <person name="Davoine C."/>
            <person name="Benlloch R."/>
            <person name="Blomberg J."/>
            <person name="Braennstroem K."/>
            <person name="Mueller D."/>
            <person name="Nilsson A."/>
            <person name="Ulfstedt M."/>
            <person name="Ronne H."/>
            <person name="Wingsle G."/>
            <person name="Nilsson O."/>
            <person name="Bjoerklund S."/>
        </authorList>
    </citation>
    <scope>INTERACTION WITH MED25</scope>
    <scope>DISRUPTION PHENOTYPE</scope>
</reference>
<comment type="function">
    <text evidence="4 5">Transcription factor involved in the up-regulation of several stress-inducible genes. Acts as a transcriptional activator by interacting with MED25 and NAC proteins. Involved in increased drought tolerance.</text>
</comment>
<comment type="subunit">
    <text evidence="4 5 6 7">Homo- and heterodimer with other ZFHD proteins. Interacts with HIPP20, HIPP21, HIPP22, HIPP23, HIPP24, HIPP26, HIPP27, HIPP30 and MED25 (via ACID domain). Interacts with NAC019, NAC055 and NAC072 (via NAC binding domain). Binds to ZHD1, ZHD2, ZHD3, ZHD4, ZHD5, ZHD6, ZHD7, ZHD8, ZHD9, ZHD12, ZHD13 and ZHD14.</text>
</comment>
<comment type="interaction">
    <interactant intactId="EBI-1806317">
        <id>Q9SEZ1</id>
    </interactant>
    <interactant intactId="EBI-2008207">
        <id>Q9SZN7</id>
        <label>HIPP26</label>
    </interactant>
    <organismsDiffer>false</organismsDiffer>
    <experiments>3</experiments>
</comment>
<comment type="interaction">
    <interactant intactId="EBI-1806317">
        <id>Q9SEZ1</id>
    </interactant>
    <interactant intactId="EBI-15924435">
        <id>Q7XYY2-1</id>
        <label>MED25</label>
    </interactant>
    <organismsDiffer>false</organismsDiffer>
    <experiments>3</experiments>
</comment>
<comment type="subcellular location">
    <subcellularLocation>
        <location evidence="8">Nucleus</location>
    </subcellularLocation>
</comment>
<comment type="tissue specificity">
    <text evidence="4">Expressed in roots, inflorescences, open flowers and seeds. Detected in stems and seedlings.</text>
</comment>
<comment type="induction">
    <text evidence="5">Up-regulated by abscisic acid and by drought and salt stress. Not induced by cold.</text>
</comment>
<comment type="domain">
    <text>The C-terminus contains the DNA-binding domain (156-218) while the N-terminus contains the transcriptional activation domain (8-82).</text>
</comment>
<comment type="domain">
    <text>The homeodomain differs form the typical one by having namely 4 instead of 3 extra amino acids inserted in the loop between helix 1 and helix 2.</text>
</comment>
<comment type="disruption phenotype">
    <text evidence="4 7">No visible phenotype. Increased sensitivity to salt stress.</text>
</comment>
<protein>
    <recommendedName>
        <fullName>Zinc-finger homeodomain protein 11</fullName>
        <shortName>AtZHD11</shortName>
    </recommendedName>
    <alternativeName>
        <fullName>Transcription factor HB29</fullName>
        <shortName>AtHB-29</shortName>
    </alternativeName>
    <alternativeName>
        <fullName>Zinc finger homeodomain transcription factor 1</fullName>
    </alternativeName>
</protein>
<proteinExistence type="evidence at protein level"/>
<dbReference type="EMBL" id="AC021046">
    <property type="protein sequence ID" value="AAF24606.1"/>
    <property type="molecule type" value="Genomic_DNA"/>
</dbReference>
<dbReference type="EMBL" id="CP002684">
    <property type="protein sequence ID" value="AEE34954.1"/>
    <property type="molecule type" value="Genomic_DNA"/>
</dbReference>
<dbReference type="PIR" id="F96717">
    <property type="entry name" value="F96717"/>
</dbReference>
<dbReference type="RefSeq" id="NP_177118.1">
    <property type="nucleotide sequence ID" value="NM_105628.2"/>
</dbReference>
<dbReference type="SMR" id="Q9SEZ1"/>
<dbReference type="BioGRID" id="28517">
    <property type="interactions" value="24"/>
</dbReference>
<dbReference type="DIP" id="DIP-46552N"/>
<dbReference type="FunCoup" id="Q9SEZ1">
    <property type="interactions" value="4"/>
</dbReference>
<dbReference type="IntAct" id="Q9SEZ1">
    <property type="interactions" value="21"/>
</dbReference>
<dbReference type="STRING" id="3702.Q9SEZ1"/>
<dbReference type="PaxDb" id="3702-AT1G69600.1"/>
<dbReference type="ProteomicsDB" id="232320"/>
<dbReference type="EnsemblPlants" id="AT1G69600.1">
    <property type="protein sequence ID" value="AT1G69600.1"/>
    <property type="gene ID" value="AT1G69600"/>
</dbReference>
<dbReference type="GeneID" id="843296"/>
<dbReference type="Gramene" id="AT1G69600.1">
    <property type="protein sequence ID" value="AT1G69600.1"/>
    <property type="gene ID" value="AT1G69600"/>
</dbReference>
<dbReference type="KEGG" id="ath:AT1G69600"/>
<dbReference type="Araport" id="AT1G69600"/>
<dbReference type="TAIR" id="AT1G69600">
    <property type="gene designation" value="ZFHD1"/>
</dbReference>
<dbReference type="eggNOG" id="ENOG502QWG3">
    <property type="taxonomic scope" value="Eukaryota"/>
</dbReference>
<dbReference type="HOGENOM" id="CLU_039237_0_0_1"/>
<dbReference type="InParanoid" id="Q9SEZ1"/>
<dbReference type="OMA" id="GLCLNTH"/>
<dbReference type="OrthoDB" id="1929626at2759"/>
<dbReference type="PhylomeDB" id="Q9SEZ1"/>
<dbReference type="PRO" id="PR:Q9SEZ1"/>
<dbReference type="Proteomes" id="UP000006548">
    <property type="component" value="Chromosome 1"/>
</dbReference>
<dbReference type="ExpressionAtlas" id="Q9SEZ1">
    <property type="expression patterns" value="baseline and differential"/>
</dbReference>
<dbReference type="GO" id="GO:0005634">
    <property type="term" value="C:nucleus"/>
    <property type="evidence" value="ECO:0000250"/>
    <property type="project" value="UniProtKB"/>
</dbReference>
<dbReference type="GO" id="GO:0003677">
    <property type="term" value="F:DNA binding"/>
    <property type="evidence" value="ECO:0000314"/>
    <property type="project" value="TAIR"/>
</dbReference>
<dbReference type="GO" id="GO:0003700">
    <property type="term" value="F:DNA-binding transcription factor activity"/>
    <property type="evidence" value="ECO:0000314"/>
    <property type="project" value="TAIR"/>
</dbReference>
<dbReference type="GO" id="GO:0042803">
    <property type="term" value="F:protein homodimerization activity"/>
    <property type="evidence" value="ECO:0000314"/>
    <property type="project" value="UniProtKB"/>
</dbReference>
<dbReference type="GO" id="GO:0000976">
    <property type="term" value="F:transcription cis-regulatory region binding"/>
    <property type="evidence" value="ECO:0000353"/>
    <property type="project" value="TAIR"/>
</dbReference>
<dbReference type="GO" id="GO:0008270">
    <property type="term" value="F:zinc ion binding"/>
    <property type="evidence" value="ECO:0007669"/>
    <property type="project" value="UniProtKB-KW"/>
</dbReference>
<dbReference type="GO" id="GO:0045893">
    <property type="term" value="P:positive regulation of DNA-templated transcription"/>
    <property type="evidence" value="ECO:0000314"/>
    <property type="project" value="TAIR"/>
</dbReference>
<dbReference type="GO" id="GO:0009414">
    <property type="term" value="P:response to water deprivation"/>
    <property type="evidence" value="ECO:0000315"/>
    <property type="project" value="TAIR"/>
</dbReference>
<dbReference type="FunFam" id="1.10.10.60:FF:000257">
    <property type="entry name" value="Zinc-finger homeodomain protein 2"/>
    <property type="match status" value="1"/>
</dbReference>
<dbReference type="Gene3D" id="1.10.10.60">
    <property type="entry name" value="Homeodomain-like"/>
    <property type="match status" value="1"/>
</dbReference>
<dbReference type="InterPro" id="IPR009057">
    <property type="entry name" value="Homeodomain-like_sf"/>
</dbReference>
<dbReference type="InterPro" id="IPR006455">
    <property type="entry name" value="Homeodomain_ZF_HD"/>
</dbReference>
<dbReference type="InterPro" id="IPR006456">
    <property type="entry name" value="ZF_HD_homeobox_Cys/His_dimer"/>
</dbReference>
<dbReference type="NCBIfam" id="TIGR01565">
    <property type="entry name" value="homeo_ZF_HD"/>
    <property type="match status" value="1"/>
</dbReference>
<dbReference type="NCBIfam" id="TIGR01566">
    <property type="entry name" value="ZF_HD_prot_N"/>
    <property type="match status" value="1"/>
</dbReference>
<dbReference type="PANTHER" id="PTHR31948:SF145">
    <property type="entry name" value="ZINC-FINGER HOMEODOMAIN PROTEIN 11"/>
    <property type="match status" value="1"/>
</dbReference>
<dbReference type="PANTHER" id="PTHR31948">
    <property type="entry name" value="ZINC-FINGER HOMEODOMAIN PROTEIN 2"/>
    <property type="match status" value="1"/>
</dbReference>
<dbReference type="Pfam" id="PF04770">
    <property type="entry name" value="ZF-HD_dimer"/>
    <property type="match status" value="1"/>
</dbReference>
<dbReference type="SUPFAM" id="SSF46689">
    <property type="entry name" value="Homeodomain-like"/>
    <property type="match status" value="1"/>
</dbReference>
<dbReference type="PROSITE" id="PS51523">
    <property type="entry name" value="ZF_HD_DIMER"/>
    <property type="match status" value="1"/>
</dbReference>